<feature type="chain" id="PRO_1000069848" description="3-octaprenyl-4-hydroxybenzoate carboxy-lyase">
    <location>
        <begin position="1"/>
        <end position="491"/>
    </location>
</feature>
<feature type="active site" description="Proton donor" evidence="1">
    <location>
        <position position="287"/>
    </location>
</feature>
<feature type="binding site" evidence="1">
    <location>
        <position position="172"/>
    </location>
    <ligand>
        <name>Mn(2+)</name>
        <dbReference type="ChEBI" id="CHEBI:29035"/>
    </ligand>
</feature>
<feature type="binding site" evidence="1">
    <location>
        <begin position="175"/>
        <end position="177"/>
    </location>
    <ligand>
        <name>prenylated FMN</name>
        <dbReference type="ChEBI" id="CHEBI:87746"/>
    </ligand>
</feature>
<feature type="binding site" evidence="1">
    <location>
        <begin position="189"/>
        <end position="191"/>
    </location>
    <ligand>
        <name>prenylated FMN</name>
        <dbReference type="ChEBI" id="CHEBI:87746"/>
    </ligand>
</feature>
<feature type="binding site" evidence="1">
    <location>
        <begin position="194"/>
        <end position="195"/>
    </location>
    <ligand>
        <name>prenylated FMN</name>
        <dbReference type="ChEBI" id="CHEBI:87746"/>
    </ligand>
</feature>
<feature type="binding site" evidence="1">
    <location>
        <position position="238"/>
    </location>
    <ligand>
        <name>Mn(2+)</name>
        <dbReference type="ChEBI" id="CHEBI:29035"/>
    </ligand>
</feature>
<accession>A6TGM1</accession>
<comment type="function">
    <text evidence="1">Catalyzes the decarboxylation of 3-octaprenyl-4-hydroxy benzoate to 2-octaprenylphenol, an intermediate step in ubiquinone biosynthesis.</text>
</comment>
<comment type="catalytic activity">
    <reaction evidence="1">
        <text>a 4-hydroxy-3-(all-trans-polyprenyl)benzoate + H(+) = a 2-(all-trans-polyprenyl)phenol + CO2</text>
        <dbReference type="Rhea" id="RHEA:41680"/>
        <dbReference type="Rhea" id="RHEA-COMP:9514"/>
        <dbReference type="Rhea" id="RHEA-COMP:9516"/>
        <dbReference type="ChEBI" id="CHEBI:1269"/>
        <dbReference type="ChEBI" id="CHEBI:15378"/>
        <dbReference type="ChEBI" id="CHEBI:16526"/>
        <dbReference type="ChEBI" id="CHEBI:78396"/>
        <dbReference type="EC" id="4.1.1.98"/>
    </reaction>
</comment>
<comment type="cofactor">
    <cofactor evidence="1">
        <name>prenylated FMN</name>
        <dbReference type="ChEBI" id="CHEBI:87746"/>
    </cofactor>
    <text evidence="1">Binds 1 prenylated FMN per subunit.</text>
</comment>
<comment type="cofactor">
    <cofactor evidence="1">
        <name>Mn(2+)</name>
        <dbReference type="ChEBI" id="CHEBI:29035"/>
    </cofactor>
</comment>
<comment type="pathway">
    <text evidence="1">Cofactor biosynthesis; ubiquinone biosynthesis.</text>
</comment>
<comment type="subunit">
    <text evidence="1">Homohexamer.</text>
</comment>
<comment type="subcellular location">
    <subcellularLocation>
        <location evidence="1">Cell membrane</location>
        <topology evidence="1">Peripheral membrane protein</topology>
    </subcellularLocation>
</comment>
<comment type="similarity">
    <text evidence="1">Belongs to the UbiD family.</text>
</comment>
<sequence>MKYHDLRDFLTLLEQQGELKRITLPVDPHLEITEIADRTLRAGGPALLFENPKGYTMPVLCNLFGTPRRVALGMGQEDVSSLREVGKLLAFLKEPEPPKGFRDLFDKLPQFKQVLNMPTKRLRGAPCQQKIIQGDDVDLNKIPIMTCWPEDAAPLITWGLTVTRGPHKERQNLGIYRQQLIGKNKLIMRWLSHRGGALDFQEWCAARPGERFPVSVALGADPATILGAVTPVPDTLSEYAFAGLLRGTKTEVVKCVSNDLEVPASAEIVLEGYIEAGEMAPEGPYGDHTGYYNEVDSFPVFTVTHITQREDAIYHSTYTGRPPDEPAVLGVALNEVFVPILQKQFPEIVDFYLPPEGCSYRLAVVTMKKQYAGHAKRVMMGVWSFLRQFMYTKFVIVCDDDVNARDWNDVIWAITTRMDPARDTVLVENTPIDYLDFASPVSGLGSKMGLDATNKWPGETQREWGRPIKKDPAVTARIDAIWDELAIFKQQ</sequence>
<proteinExistence type="inferred from homology"/>
<dbReference type="EC" id="4.1.1.98" evidence="1"/>
<dbReference type="EMBL" id="CP000647">
    <property type="protein sequence ID" value="ABR79705.1"/>
    <property type="molecule type" value="Genomic_DNA"/>
</dbReference>
<dbReference type="RefSeq" id="WP_004146456.1">
    <property type="nucleotide sequence ID" value="NC_009648.1"/>
</dbReference>
<dbReference type="SMR" id="A6TGM1"/>
<dbReference type="STRING" id="272620.KPN_04337"/>
<dbReference type="PaxDb" id="272620-KPN_04337"/>
<dbReference type="EnsemblBacteria" id="ABR79705">
    <property type="protein sequence ID" value="ABR79705"/>
    <property type="gene ID" value="KPN_04337"/>
</dbReference>
<dbReference type="KEGG" id="kpn:KPN_04337"/>
<dbReference type="HOGENOM" id="CLU_023348_4_1_6"/>
<dbReference type="UniPathway" id="UPA00232"/>
<dbReference type="Proteomes" id="UP000000265">
    <property type="component" value="Chromosome"/>
</dbReference>
<dbReference type="GO" id="GO:0005829">
    <property type="term" value="C:cytosol"/>
    <property type="evidence" value="ECO:0007669"/>
    <property type="project" value="TreeGrafter"/>
</dbReference>
<dbReference type="GO" id="GO:0005886">
    <property type="term" value="C:plasma membrane"/>
    <property type="evidence" value="ECO:0007669"/>
    <property type="project" value="UniProtKB-SubCell"/>
</dbReference>
<dbReference type="GO" id="GO:0008694">
    <property type="term" value="F:3-octaprenyl-4-hydroxybenzoate carboxy-lyase activity"/>
    <property type="evidence" value="ECO:0007669"/>
    <property type="project" value="UniProtKB-UniRule"/>
</dbReference>
<dbReference type="GO" id="GO:0046872">
    <property type="term" value="F:metal ion binding"/>
    <property type="evidence" value="ECO:0007669"/>
    <property type="project" value="UniProtKB-KW"/>
</dbReference>
<dbReference type="GO" id="GO:0006744">
    <property type="term" value="P:ubiquinone biosynthetic process"/>
    <property type="evidence" value="ECO:0007669"/>
    <property type="project" value="UniProtKB-UniRule"/>
</dbReference>
<dbReference type="FunFam" id="1.20.5.570:FF:000001">
    <property type="entry name" value="3-octaprenyl-4-hydroxybenzoate carboxy-lyase"/>
    <property type="match status" value="1"/>
</dbReference>
<dbReference type="FunFam" id="3.40.1670.10:FF:000001">
    <property type="entry name" value="3-octaprenyl-4-hydroxybenzoate carboxy-lyase"/>
    <property type="match status" value="1"/>
</dbReference>
<dbReference type="Gene3D" id="1.20.5.570">
    <property type="entry name" value="Single helix bin"/>
    <property type="match status" value="1"/>
</dbReference>
<dbReference type="Gene3D" id="3.40.1670.10">
    <property type="entry name" value="UbiD C-terminal domain-like"/>
    <property type="match status" value="1"/>
</dbReference>
<dbReference type="HAMAP" id="MF_01636">
    <property type="entry name" value="UbiD"/>
    <property type="match status" value="1"/>
</dbReference>
<dbReference type="InterPro" id="IPR002830">
    <property type="entry name" value="UbiD"/>
</dbReference>
<dbReference type="InterPro" id="IPR049381">
    <property type="entry name" value="UbiD-like_C"/>
</dbReference>
<dbReference type="InterPro" id="IPR049383">
    <property type="entry name" value="UbiD-like_N"/>
</dbReference>
<dbReference type="InterPro" id="IPR023677">
    <property type="entry name" value="UbiD_bacteria"/>
</dbReference>
<dbReference type="InterPro" id="IPR048304">
    <property type="entry name" value="UbiD_Rift_dom"/>
</dbReference>
<dbReference type="NCBIfam" id="NF008175">
    <property type="entry name" value="PRK10922.1"/>
    <property type="match status" value="1"/>
</dbReference>
<dbReference type="NCBIfam" id="TIGR00148">
    <property type="entry name" value="UbiD family decarboxylase"/>
    <property type="match status" value="1"/>
</dbReference>
<dbReference type="PANTHER" id="PTHR30108">
    <property type="entry name" value="3-OCTAPRENYL-4-HYDROXYBENZOATE CARBOXY-LYASE-RELATED"/>
    <property type="match status" value="1"/>
</dbReference>
<dbReference type="PANTHER" id="PTHR30108:SF17">
    <property type="entry name" value="FERULIC ACID DECARBOXYLASE 1"/>
    <property type="match status" value="1"/>
</dbReference>
<dbReference type="Pfam" id="PF01977">
    <property type="entry name" value="UbiD"/>
    <property type="match status" value="1"/>
</dbReference>
<dbReference type="Pfam" id="PF20696">
    <property type="entry name" value="UbiD_C"/>
    <property type="match status" value="1"/>
</dbReference>
<dbReference type="Pfam" id="PF20695">
    <property type="entry name" value="UbiD_N"/>
    <property type="match status" value="1"/>
</dbReference>
<dbReference type="SUPFAM" id="SSF50475">
    <property type="entry name" value="FMN-binding split barrel"/>
    <property type="match status" value="1"/>
</dbReference>
<dbReference type="SUPFAM" id="SSF143968">
    <property type="entry name" value="UbiD C-terminal domain-like"/>
    <property type="match status" value="1"/>
</dbReference>
<name>UBID_KLEP7</name>
<organism>
    <name type="scientific">Klebsiella pneumoniae subsp. pneumoniae (strain ATCC 700721 / MGH 78578)</name>
    <dbReference type="NCBI Taxonomy" id="272620"/>
    <lineage>
        <taxon>Bacteria</taxon>
        <taxon>Pseudomonadati</taxon>
        <taxon>Pseudomonadota</taxon>
        <taxon>Gammaproteobacteria</taxon>
        <taxon>Enterobacterales</taxon>
        <taxon>Enterobacteriaceae</taxon>
        <taxon>Klebsiella/Raoultella group</taxon>
        <taxon>Klebsiella</taxon>
        <taxon>Klebsiella pneumoniae complex</taxon>
    </lineage>
</organism>
<evidence type="ECO:0000255" key="1">
    <source>
        <dbReference type="HAMAP-Rule" id="MF_01636"/>
    </source>
</evidence>
<keyword id="KW-1003">Cell membrane</keyword>
<keyword id="KW-0210">Decarboxylase</keyword>
<keyword id="KW-0285">Flavoprotein</keyword>
<keyword id="KW-0288">FMN</keyword>
<keyword id="KW-0456">Lyase</keyword>
<keyword id="KW-0464">Manganese</keyword>
<keyword id="KW-0472">Membrane</keyword>
<keyword id="KW-0479">Metal-binding</keyword>
<keyword id="KW-0831">Ubiquinone biosynthesis</keyword>
<gene>
    <name evidence="1" type="primary">ubiD</name>
    <name type="ordered locus">KPN78578_42810</name>
    <name type="ORF">KPN_04337</name>
</gene>
<protein>
    <recommendedName>
        <fullName evidence="1">3-octaprenyl-4-hydroxybenzoate carboxy-lyase</fullName>
        <ecNumber evidence="1">4.1.1.98</ecNumber>
    </recommendedName>
    <alternativeName>
        <fullName evidence="1">Polyprenyl p-hydroxybenzoate decarboxylase</fullName>
    </alternativeName>
</protein>
<reference key="1">
    <citation type="submission" date="2006-09" db="EMBL/GenBank/DDBJ databases">
        <authorList>
            <consortium name="The Klebsiella pneumonia Genome Sequencing Project"/>
            <person name="McClelland M."/>
            <person name="Sanderson E.K."/>
            <person name="Spieth J."/>
            <person name="Clifton W.S."/>
            <person name="Latreille P."/>
            <person name="Sabo A."/>
            <person name="Pepin K."/>
            <person name="Bhonagiri V."/>
            <person name="Porwollik S."/>
            <person name="Ali J."/>
            <person name="Wilson R.K."/>
        </authorList>
    </citation>
    <scope>NUCLEOTIDE SEQUENCE [LARGE SCALE GENOMIC DNA]</scope>
    <source>
        <strain>ATCC 700721 / MGH 78578</strain>
    </source>
</reference>